<proteinExistence type="inferred from homology"/>
<name>MURB_BRUA2</name>
<comment type="function">
    <text evidence="1">Cell wall formation.</text>
</comment>
<comment type="catalytic activity">
    <reaction evidence="1">
        <text>UDP-N-acetyl-alpha-D-muramate + NADP(+) = UDP-N-acetyl-3-O-(1-carboxyvinyl)-alpha-D-glucosamine + NADPH + H(+)</text>
        <dbReference type="Rhea" id="RHEA:12248"/>
        <dbReference type="ChEBI" id="CHEBI:15378"/>
        <dbReference type="ChEBI" id="CHEBI:57783"/>
        <dbReference type="ChEBI" id="CHEBI:58349"/>
        <dbReference type="ChEBI" id="CHEBI:68483"/>
        <dbReference type="ChEBI" id="CHEBI:70757"/>
        <dbReference type="EC" id="1.3.1.98"/>
    </reaction>
</comment>
<comment type="cofactor">
    <cofactor evidence="1">
        <name>FAD</name>
        <dbReference type="ChEBI" id="CHEBI:57692"/>
    </cofactor>
</comment>
<comment type="pathway">
    <text evidence="1">Cell wall biogenesis; peptidoglycan biosynthesis.</text>
</comment>
<comment type="subcellular location">
    <subcellularLocation>
        <location evidence="1">Cytoplasm</location>
    </subcellularLocation>
</comment>
<comment type="similarity">
    <text evidence="1">Belongs to the MurB family.</text>
</comment>
<gene>
    <name evidence="1" type="primary">murB</name>
    <name type="ordered locus">BAB1_1448</name>
</gene>
<dbReference type="EC" id="1.3.1.98" evidence="1"/>
<dbReference type="EMBL" id="AM040264">
    <property type="protein sequence ID" value="CAJ11404.1"/>
    <property type="molecule type" value="Genomic_DNA"/>
</dbReference>
<dbReference type="RefSeq" id="WP_002966892.1">
    <property type="nucleotide sequence ID" value="NZ_KN046823.1"/>
</dbReference>
<dbReference type="SMR" id="Q2YLY7"/>
<dbReference type="STRING" id="359391.BAB1_1448"/>
<dbReference type="GeneID" id="93016273"/>
<dbReference type="KEGG" id="bmf:BAB1_1448"/>
<dbReference type="HOGENOM" id="CLU_035304_1_0_5"/>
<dbReference type="UniPathway" id="UPA00219"/>
<dbReference type="Proteomes" id="UP000002719">
    <property type="component" value="Chromosome I"/>
</dbReference>
<dbReference type="GO" id="GO:0005829">
    <property type="term" value="C:cytosol"/>
    <property type="evidence" value="ECO:0007669"/>
    <property type="project" value="TreeGrafter"/>
</dbReference>
<dbReference type="GO" id="GO:0071949">
    <property type="term" value="F:FAD binding"/>
    <property type="evidence" value="ECO:0007669"/>
    <property type="project" value="InterPro"/>
</dbReference>
<dbReference type="GO" id="GO:0008762">
    <property type="term" value="F:UDP-N-acetylmuramate dehydrogenase activity"/>
    <property type="evidence" value="ECO:0007669"/>
    <property type="project" value="UniProtKB-UniRule"/>
</dbReference>
<dbReference type="GO" id="GO:0051301">
    <property type="term" value="P:cell division"/>
    <property type="evidence" value="ECO:0007669"/>
    <property type="project" value="UniProtKB-KW"/>
</dbReference>
<dbReference type="GO" id="GO:0071555">
    <property type="term" value="P:cell wall organization"/>
    <property type="evidence" value="ECO:0007669"/>
    <property type="project" value="UniProtKB-KW"/>
</dbReference>
<dbReference type="GO" id="GO:0009252">
    <property type="term" value="P:peptidoglycan biosynthetic process"/>
    <property type="evidence" value="ECO:0007669"/>
    <property type="project" value="UniProtKB-UniRule"/>
</dbReference>
<dbReference type="GO" id="GO:0008360">
    <property type="term" value="P:regulation of cell shape"/>
    <property type="evidence" value="ECO:0007669"/>
    <property type="project" value="UniProtKB-KW"/>
</dbReference>
<dbReference type="Gene3D" id="3.30.465.10">
    <property type="match status" value="1"/>
</dbReference>
<dbReference type="Gene3D" id="3.90.78.10">
    <property type="entry name" value="UDP-N-acetylenolpyruvoylglucosamine reductase, C-terminal domain"/>
    <property type="match status" value="1"/>
</dbReference>
<dbReference type="Gene3D" id="3.30.43.10">
    <property type="entry name" value="Uridine Diphospho-n-acetylenolpyruvylglucosamine Reductase, domain 2"/>
    <property type="match status" value="1"/>
</dbReference>
<dbReference type="HAMAP" id="MF_00037">
    <property type="entry name" value="MurB"/>
    <property type="match status" value="1"/>
</dbReference>
<dbReference type="InterPro" id="IPR016166">
    <property type="entry name" value="FAD-bd_PCMH"/>
</dbReference>
<dbReference type="InterPro" id="IPR036318">
    <property type="entry name" value="FAD-bd_PCMH-like_sf"/>
</dbReference>
<dbReference type="InterPro" id="IPR016167">
    <property type="entry name" value="FAD-bd_PCMH_sub1"/>
</dbReference>
<dbReference type="InterPro" id="IPR016169">
    <property type="entry name" value="FAD-bd_PCMH_sub2"/>
</dbReference>
<dbReference type="InterPro" id="IPR003170">
    <property type="entry name" value="MurB"/>
</dbReference>
<dbReference type="InterPro" id="IPR011601">
    <property type="entry name" value="MurB_C"/>
</dbReference>
<dbReference type="InterPro" id="IPR036635">
    <property type="entry name" value="MurB_C_sf"/>
</dbReference>
<dbReference type="InterPro" id="IPR006094">
    <property type="entry name" value="Oxid_FAD_bind_N"/>
</dbReference>
<dbReference type="NCBIfam" id="TIGR00179">
    <property type="entry name" value="murB"/>
    <property type="match status" value="1"/>
</dbReference>
<dbReference type="NCBIfam" id="NF010480">
    <property type="entry name" value="PRK13905.1"/>
    <property type="match status" value="1"/>
</dbReference>
<dbReference type="PANTHER" id="PTHR21071">
    <property type="entry name" value="UDP-N-ACETYLENOLPYRUVOYLGLUCOSAMINE REDUCTASE"/>
    <property type="match status" value="1"/>
</dbReference>
<dbReference type="PANTHER" id="PTHR21071:SF4">
    <property type="entry name" value="UDP-N-ACETYLENOLPYRUVOYLGLUCOSAMINE REDUCTASE"/>
    <property type="match status" value="1"/>
</dbReference>
<dbReference type="Pfam" id="PF01565">
    <property type="entry name" value="FAD_binding_4"/>
    <property type="match status" value="1"/>
</dbReference>
<dbReference type="Pfam" id="PF02873">
    <property type="entry name" value="MurB_C"/>
    <property type="match status" value="1"/>
</dbReference>
<dbReference type="SUPFAM" id="SSF56176">
    <property type="entry name" value="FAD-binding/transporter-associated domain-like"/>
    <property type="match status" value="1"/>
</dbReference>
<dbReference type="SUPFAM" id="SSF56194">
    <property type="entry name" value="Uridine diphospho-N-Acetylenolpyruvylglucosamine reductase, MurB, C-terminal domain"/>
    <property type="match status" value="1"/>
</dbReference>
<dbReference type="PROSITE" id="PS51387">
    <property type="entry name" value="FAD_PCMH"/>
    <property type="match status" value="1"/>
</dbReference>
<evidence type="ECO:0000255" key="1">
    <source>
        <dbReference type="HAMAP-Rule" id="MF_00037"/>
    </source>
</evidence>
<protein>
    <recommendedName>
        <fullName evidence="1">UDP-N-acetylenolpyruvoylglucosamine reductase</fullName>
        <ecNumber evidence="1">1.3.1.98</ecNumber>
    </recommendedName>
    <alternativeName>
        <fullName evidence="1">UDP-N-acetylmuramate dehydrogenase</fullName>
    </alternativeName>
</protein>
<reference key="1">
    <citation type="journal article" date="2005" name="Infect. Immun.">
        <title>Whole-genome analyses of speciation events in pathogenic Brucellae.</title>
        <authorList>
            <person name="Chain P.S."/>
            <person name="Comerci D.J."/>
            <person name="Tolmasky M.E."/>
            <person name="Larimer F.W."/>
            <person name="Malfatti S.A."/>
            <person name="Vergez L.M."/>
            <person name="Aguero F."/>
            <person name="Land M.L."/>
            <person name="Ugalde R.A."/>
            <person name="Garcia E."/>
        </authorList>
    </citation>
    <scope>NUCLEOTIDE SEQUENCE [LARGE SCALE GENOMIC DNA]</scope>
    <source>
        <strain>2308</strain>
    </source>
</reference>
<feature type="chain" id="PRO_1000002866" description="UDP-N-acetylenolpyruvoylglucosamine reductase">
    <location>
        <begin position="1"/>
        <end position="322"/>
    </location>
</feature>
<feature type="domain" description="FAD-binding PCMH-type" evidence="1">
    <location>
        <begin position="36"/>
        <end position="202"/>
    </location>
</feature>
<feature type="active site" evidence="1">
    <location>
        <position position="182"/>
    </location>
</feature>
<feature type="active site" description="Proton donor" evidence="1">
    <location>
        <position position="231"/>
    </location>
</feature>
<feature type="active site" evidence="1">
    <location>
        <position position="301"/>
    </location>
</feature>
<organism>
    <name type="scientific">Brucella abortus (strain 2308)</name>
    <dbReference type="NCBI Taxonomy" id="359391"/>
    <lineage>
        <taxon>Bacteria</taxon>
        <taxon>Pseudomonadati</taxon>
        <taxon>Pseudomonadota</taxon>
        <taxon>Alphaproteobacteria</taxon>
        <taxon>Hyphomicrobiales</taxon>
        <taxon>Brucellaceae</taxon>
        <taxon>Brucella/Ochrobactrum group</taxon>
        <taxon>Brucella</taxon>
    </lineage>
</organism>
<accession>Q2YLY7</accession>
<sequence length="322" mass="34881">MMESGEALLKKLDGRLSGLRGRLTPDTGMDKITWFRAGGPAQVLFQPSDEEDLSAFLKAVPEEIPLLVVGIGSNLLVRDGGVPGFVVRLSAKGFGEVEQVCDTQLRAGAAAPDKRVAAAALEAGLAGFHFYHGIPGGIGGALRMNAGANGVETRERVVEVRALDRKGEVHVLSNADMGYAYRHSSASPDLIFTSVLFEGVPGERDDIRRAMDEVQHHRETVQPVREKTGGSTFKNSEGTSAWKEIDKAGCRGLRVGGAQMSEMHCNFMINTGNATGHDLETLGETVRARVFENSGIRLHWEIKRLGLFREGEQIEEFLGKIV</sequence>
<keyword id="KW-0131">Cell cycle</keyword>
<keyword id="KW-0132">Cell division</keyword>
<keyword id="KW-0133">Cell shape</keyword>
<keyword id="KW-0961">Cell wall biogenesis/degradation</keyword>
<keyword id="KW-0963">Cytoplasm</keyword>
<keyword id="KW-0274">FAD</keyword>
<keyword id="KW-0285">Flavoprotein</keyword>
<keyword id="KW-0521">NADP</keyword>
<keyword id="KW-0560">Oxidoreductase</keyword>
<keyword id="KW-0573">Peptidoglycan synthesis</keyword>
<keyword id="KW-1185">Reference proteome</keyword>